<sequence>MSDSFFKDIPEFLETRVNESLDARSKSIAQFKELGPPDQVNTIKVNAKNPSKEVGTYHFVSGVDASSSASLAAYLNTLSYSLDKSQQWFGKGNAWRVSHGVYCCYNVFSQVDVRVEAKIPGGVDTYAIDENGQKHIVDARMWTEAYMSEVLRSLLYSDDTNSRFAGHRRFNPIPNPDAELRFFEAAEQLFTLGYTLGSSSEVRVPTHVNNHLVRGIFAYLKQTCRYSAALNLFEKLRVSIPEVSVLLAELYLLMDHEVHAVRILHDSLLKQRMSASLLIVQVKFLISKERYDLALICAKRAVHASPSEFATWACLADVYLHLEDFKSALLALNSCPMYTYYERDAYPLPPSARAHLPFPVNFPKEELEVENNAQNGYTVSTEITDPYLARLPSPSLRGTFAKAYEMLTLICAKIGWDELLRVRSAVFVMEEEYRSLNDITEGNASPDQNEVAEESVAEEVVGLDKPETSVGSLPKNATVQSKRLCERWLDNLFMVLYEDLRVFTIWRAEYTHFKSQGLAYRKAPAEWEILGEVAFRLHHRVEAVEAFCACLESMFSFKAWKTLLIIYSEDNNIELVLTAIAKLTLYNYRWYQEYSPFLLEQMKNRIMQDGALKMKSILASTRLDPYILNLIHKLYFEWAIAFQIPGHEL</sequence>
<feature type="chain" id="PRO_0000116495" description="Uncharacterized protein C31F10.16">
    <location>
        <begin position="1"/>
        <end position="649"/>
    </location>
</feature>
<dbReference type="EMBL" id="CU329671">
    <property type="protein sequence ID" value="CAB10092.2"/>
    <property type="molecule type" value="Genomic_DNA"/>
</dbReference>
<dbReference type="EMBL" id="AB027942">
    <property type="protein sequence ID" value="BAA87246.1"/>
    <property type="molecule type" value="Genomic_DNA"/>
</dbReference>
<dbReference type="PIR" id="T40219">
    <property type="entry name" value="T40219"/>
</dbReference>
<dbReference type="SMR" id="P87317"/>
<dbReference type="BioGRID" id="276772">
    <property type="interactions" value="5"/>
</dbReference>
<dbReference type="FunCoup" id="P87317">
    <property type="interactions" value="23"/>
</dbReference>
<dbReference type="STRING" id="284812.P87317"/>
<dbReference type="iPTMnet" id="P87317"/>
<dbReference type="PaxDb" id="4896-SPBC31F10.16.1"/>
<dbReference type="EnsemblFungi" id="SPBC31F10.16.1">
    <property type="protein sequence ID" value="SPBC31F10.16.1:pep"/>
    <property type="gene ID" value="SPBC31F10.16"/>
</dbReference>
<dbReference type="KEGG" id="spo:2540240"/>
<dbReference type="PomBase" id="SPBC31F10.16"/>
<dbReference type="VEuPathDB" id="FungiDB:SPBC31F10.16"/>
<dbReference type="eggNOG" id="ENOG502QSKI">
    <property type="taxonomic scope" value="Eukaryota"/>
</dbReference>
<dbReference type="HOGENOM" id="CLU_019711_0_0_1"/>
<dbReference type="InParanoid" id="P87317"/>
<dbReference type="OMA" id="IEAYQHC"/>
<dbReference type="PRO" id="PR:P87317"/>
<dbReference type="Proteomes" id="UP000002485">
    <property type="component" value="Chromosome II"/>
</dbReference>
<dbReference type="GO" id="GO:0032153">
    <property type="term" value="C:cell division site"/>
    <property type="evidence" value="ECO:0007005"/>
    <property type="project" value="PomBase"/>
</dbReference>
<dbReference type="GO" id="GO:0005737">
    <property type="term" value="C:cytoplasm"/>
    <property type="evidence" value="ECO:0007005"/>
    <property type="project" value="PomBase"/>
</dbReference>
<dbReference type="GO" id="GO:0005829">
    <property type="term" value="C:cytosol"/>
    <property type="evidence" value="ECO:0007005"/>
    <property type="project" value="PomBase"/>
</dbReference>
<dbReference type="GO" id="GO:0034044">
    <property type="term" value="C:exomer complex"/>
    <property type="evidence" value="ECO:0000353"/>
    <property type="project" value="PomBase"/>
</dbReference>
<dbReference type="GO" id="GO:0005634">
    <property type="term" value="C:nucleus"/>
    <property type="evidence" value="ECO:0007005"/>
    <property type="project" value="PomBase"/>
</dbReference>
<dbReference type="GO" id="GO:0043001">
    <property type="term" value="P:Golgi to plasma membrane protein transport"/>
    <property type="evidence" value="ECO:0000315"/>
    <property type="project" value="PomBase"/>
</dbReference>
<dbReference type="GO" id="GO:0006893">
    <property type="term" value="P:Golgi to plasma membrane transport"/>
    <property type="evidence" value="ECO:0000318"/>
    <property type="project" value="GO_Central"/>
</dbReference>
<dbReference type="GO" id="GO:0006896">
    <property type="term" value="P:Golgi to vacuole transport"/>
    <property type="evidence" value="ECO:0000315"/>
    <property type="project" value="PomBase"/>
</dbReference>
<dbReference type="GO" id="GO:0006874">
    <property type="term" value="P:intracellular calcium ion homeostasis"/>
    <property type="evidence" value="ECO:0000315"/>
    <property type="project" value="PomBase"/>
</dbReference>
<dbReference type="Gene3D" id="1.25.40.10">
    <property type="entry name" value="Tetratricopeptide repeat domain"/>
    <property type="match status" value="1"/>
</dbReference>
<dbReference type="InterPro" id="IPR015374">
    <property type="entry name" value="ChAPs"/>
</dbReference>
<dbReference type="InterPro" id="IPR011990">
    <property type="entry name" value="TPR-like_helical_dom_sf"/>
</dbReference>
<dbReference type="PANTHER" id="PTHR31975">
    <property type="entry name" value="BUD SITE SELECTION PROTEIN 7-RELATED"/>
    <property type="match status" value="1"/>
</dbReference>
<dbReference type="PANTHER" id="PTHR31975:SF1">
    <property type="entry name" value="BUD SITE SELECTION PROTEIN 7-RELATED"/>
    <property type="match status" value="1"/>
</dbReference>
<dbReference type="Pfam" id="PF09295">
    <property type="entry name" value="ChAPs"/>
    <property type="match status" value="1"/>
</dbReference>
<dbReference type="SUPFAM" id="SSF48452">
    <property type="entry name" value="TPR-like"/>
    <property type="match status" value="1"/>
</dbReference>
<gene>
    <name type="ORF">SPBC31F10.16</name>
</gene>
<keyword id="KW-0963">Cytoplasm</keyword>
<keyword id="KW-0539">Nucleus</keyword>
<keyword id="KW-1185">Reference proteome</keyword>
<proteinExistence type="predicted"/>
<protein>
    <recommendedName>
        <fullName>Uncharacterized protein C31F10.16</fullName>
    </recommendedName>
</protein>
<accession>P87317</accession>
<accession>Q9US94</accession>
<reference key="1">
    <citation type="journal article" date="2002" name="Nature">
        <title>The genome sequence of Schizosaccharomyces pombe.</title>
        <authorList>
            <person name="Wood V."/>
            <person name="Gwilliam R."/>
            <person name="Rajandream M.A."/>
            <person name="Lyne M.H."/>
            <person name="Lyne R."/>
            <person name="Stewart A."/>
            <person name="Sgouros J.G."/>
            <person name="Peat N."/>
            <person name="Hayles J."/>
            <person name="Baker S.G."/>
            <person name="Basham D."/>
            <person name="Bowman S."/>
            <person name="Brooks K."/>
            <person name="Brown D."/>
            <person name="Brown S."/>
            <person name="Chillingworth T."/>
            <person name="Churcher C.M."/>
            <person name="Collins M."/>
            <person name="Connor R."/>
            <person name="Cronin A."/>
            <person name="Davis P."/>
            <person name="Feltwell T."/>
            <person name="Fraser A."/>
            <person name="Gentles S."/>
            <person name="Goble A."/>
            <person name="Hamlin N."/>
            <person name="Harris D.E."/>
            <person name="Hidalgo J."/>
            <person name="Hodgson G."/>
            <person name="Holroyd S."/>
            <person name="Hornsby T."/>
            <person name="Howarth S."/>
            <person name="Huckle E.J."/>
            <person name="Hunt S."/>
            <person name="Jagels K."/>
            <person name="James K.D."/>
            <person name="Jones L."/>
            <person name="Jones M."/>
            <person name="Leather S."/>
            <person name="McDonald S."/>
            <person name="McLean J."/>
            <person name="Mooney P."/>
            <person name="Moule S."/>
            <person name="Mungall K.L."/>
            <person name="Murphy L.D."/>
            <person name="Niblett D."/>
            <person name="Odell C."/>
            <person name="Oliver K."/>
            <person name="O'Neil S."/>
            <person name="Pearson D."/>
            <person name="Quail M.A."/>
            <person name="Rabbinowitsch E."/>
            <person name="Rutherford K.M."/>
            <person name="Rutter S."/>
            <person name="Saunders D."/>
            <person name="Seeger K."/>
            <person name="Sharp S."/>
            <person name="Skelton J."/>
            <person name="Simmonds M.N."/>
            <person name="Squares R."/>
            <person name="Squares S."/>
            <person name="Stevens K."/>
            <person name="Taylor K."/>
            <person name="Taylor R.G."/>
            <person name="Tivey A."/>
            <person name="Walsh S.V."/>
            <person name="Warren T."/>
            <person name="Whitehead S."/>
            <person name="Woodward J.R."/>
            <person name="Volckaert G."/>
            <person name="Aert R."/>
            <person name="Robben J."/>
            <person name="Grymonprez B."/>
            <person name="Weltjens I."/>
            <person name="Vanstreels E."/>
            <person name="Rieger M."/>
            <person name="Schaefer M."/>
            <person name="Mueller-Auer S."/>
            <person name="Gabel C."/>
            <person name="Fuchs M."/>
            <person name="Duesterhoeft A."/>
            <person name="Fritzc C."/>
            <person name="Holzer E."/>
            <person name="Moestl D."/>
            <person name="Hilbert H."/>
            <person name="Borzym K."/>
            <person name="Langer I."/>
            <person name="Beck A."/>
            <person name="Lehrach H."/>
            <person name="Reinhardt R."/>
            <person name="Pohl T.M."/>
            <person name="Eger P."/>
            <person name="Zimmermann W."/>
            <person name="Wedler H."/>
            <person name="Wambutt R."/>
            <person name="Purnelle B."/>
            <person name="Goffeau A."/>
            <person name="Cadieu E."/>
            <person name="Dreano S."/>
            <person name="Gloux S."/>
            <person name="Lelaure V."/>
            <person name="Mottier S."/>
            <person name="Galibert F."/>
            <person name="Aves S.J."/>
            <person name="Xiang Z."/>
            <person name="Hunt C."/>
            <person name="Moore K."/>
            <person name="Hurst S.M."/>
            <person name="Lucas M."/>
            <person name="Rochet M."/>
            <person name="Gaillardin C."/>
            <person name="Tallada V.A."/>
            <person name="Garzon A."/>
            <person name="Thode G."/>
            <person name="Daga R.R."/>
            <person name="Cruzado L."/>
            <person name="Jimenez J."/>
            <person name="Sanchez M."/>
            <person name="del Rey F."/>
            <person name="Benito J."/>
            <person name="Dominguez A."/>
            <person name="Revuelta J.L."/>
            <person name="Moreno S."/>
            <person name="Armstrong J."/>
            <person name="Forsburg S.L."/>
            <person name="Cerutti L."/>
            <person name="Lowe T."/>
            <person name="McCombie W.R."/>
            <person name="Paulsen I."/>
            <person name="Potashkin J."/>
            <person name="Shpakovski G.V."/>
            <person name="Ussery D."/>
            <person name="Barrell B.G."/>
            <person name="Nurse P."/>
        </authorList>
    </citation>
    <scope>NUCLEOTIDE SEQUENCE [LARGE SCALE GENOMIC DNA]</scope>
    <source>
        <strain>972 / ATCC 24843</strain>
    </source>
</reference>
<reference key="2">
    <citation type="journal article" date="2011" name="Science">
        <title>Comparative functional genomics of the fission yeasts.</title>
        <authorList>
            <person name="Rhind N."/>
            <person name="Chen Z."/>
            <person name="Yassour M."/>
            <person name="Thompson D.A."/>
            <person name="Haas B.J."/>
            <person name="Habib N."/>
            <person name="Wapinski I."/>
            <person name="Roy S."/>
            <person name="Lin M.F."/>
            <person name="Heiman D.I."/>
            <person name="Young S.K."/>
            <person name="Furuya K."/>
            <person name="Guo Y."/>
            <person name="Pidoux A."/>
            <person name="Chen H.M."/>
            <person name="Robbertse B."/>
            <person name="Goldberg J.M."/>
            <person name="Aoki K."/>
            <person name="Bayne E.H."/>
            <person name="Berlin A.M."/>
            <person name="Desjardins C.A."/>
            <person name="Dobbs E."/>
            <person name="Dukaj L."/>
            <person name="Fan L."/>
            <person name="FitzGerald M.G."/>
            <person name="French C."/>
            <person name="Gujja S."/>
            <person name="Hansen K."/>
            <person name="Keifenheim D."/>
            <person name="Levin J.Z."/>
            <person name="Mosher R.A."/>
            <person name="Mueller C.A."/>
            <person name="Pfiffner J."/>
            <person name="Priest M."/>
            <person name="Russ C."/>
            <person name="Smialowska A."/>
            <person name="Swoboda P."/>
            <person name="Sykes S.M."/>
            <person name="Vaughn M."/>
            <person name="Vengrova S."/>
            <person name="Yoder R."/>
            <person name="Zeng Q."/>
            <person name="Allshire R."/>
            <person name="Baulcombe D."/>
            <person name="Birren B.W."/>
            <person name="Brown W."/>
            <person name="Ekwall K."/>
            <person name="Kellis M."/>
            <person name="Leatherwood J."/>
            <person name="Levin H."/>
            <person name="Margalit H."/>
            <person name="Martienssen R."/>
            <person name="Nieduszynski C.A."/>
            <person name="Spatafora J.W."/>
            <person name="Friedman N."/>
            <person name="Dalgaard J.Z."/>
            <person name="Baumann P."/>
            <person name="Niki H."/>
            <person name="Regev A."/>
            <person name="Nusbaum C."/>
        </authorList>
    </citation>
    <scope>REVISION OF GENE MODEL</scope>
</reference>
<reference key="3">
    <citation type="journal article" date="2000" name="Genes Cells">
        <title>Large-scale screening of intracellular protein localization in living fission yeast cells by the use of a GFP-fusion genomic DNA library.</title>
        <authorList>
            <person name="Ding D.-Q."/>
            <person name="Tomita Y."/>
            <person name="Yamamoto A."/>
            <person name="Chikashige Y."/>
            <person name="Haraguchi T."/>
            <person name="Hiraoka Y."/>
        </authorList>
    </citation>
    <scope>NUCLEOTIDE SEQUENCE [LARGE SCALE GENOMIC DNA] OF 177-385</scope>
    <scope>SUBCELLULAR LOCATION</scope>
    <source>
        <strain>ATCC 38364 / 968</strain>
    </source>
</reference>
<reference key="4">
    <citation type="journal article" date="2006" name="Nat. Biotechnol.">
        <title>ORFeome cloning and global analysis of protein localization in the fission yeast Schizosaccharomyces pombe.</title>
        <authorList>
            <person name="Matsuyama A."/>
            <person name="Arai R."/>
            <person name="Yashiroda Y."/>
            <person name="Shirai A."/>
            <person name="Kamata A."/>
            <person name="Sekido S."/>
            <person name="Kobayashi Y."/>
            <person name="Hashimoto A."/>
            <person name="Hamamoto M."/>
            <person name="Hiraoka Y."/>
            <person name="Horinouchi S."/>
            <person name="Yoshida M."/>
        </authorList>
    </citation>
    <scope>SUBCELLULAR LOCATION [LARGE SCALE ANALYSIS]</scope>
</reference>
<organism>
    <name type="scientific">Schizosaccharomyces pombe (strain 972 / ATCC 24843)</name>
    <name type="common">Fission yeast</name>
    <dbReference type="NCBI Taxonomy" id="284812"/>
    <lineage>
        <taxon>Eukaryota</taxon>
        <taxon>Fungi</taxon>
        <taxon>Dikarya</taxon>
        <taxon>Ascomycota</taxon>
        <taxon>Taphrinomycotina</taxon>
        <taxon>Schizosaccharomycetes</taxon>
        <taxon>Schizosaccharomycetales</taxon>
        <taxon>Schizosaccharomycetaceae</taxon>
        <taxon>Schizosaccharomyces</taxon>
    </lineage>
</organism>
<name>YB2G_SCHPO</name>
<comment type="subcellular location">
    <subcellularLocation>
        <location>Nucleus</location>
    </subcellularLocation>
    <subcellularLocation>
        <location>Cytoplasm</location>
    </subcellularLocation>
</comment>